<accession>Q8Z470</accession>
<feature type="chain" id="PRO_0000091528" description="Sulfate adenylyltransferase subunit 1">
    <location>
        <begin position="1"/>
        <end position="479"/>
    </location>
</feature>
<feature type="domain" description="tr-type G">
    <location>
        <begin position="25"/>
        <end position="239"/>
    </location>
</feature>
<feature type="region of interest" description="G1" evidence="1">
    <location>
        <begin position="34"/>
        <end position="41"/>
    </location>
</feature>
<feature type="region of interest" description="G2" evidence="1">
    <location>
        <begin position="92"/>
        <end position="96"/>
    </location>
</feature>
<feature type="region of interest" description="G3" evidence="1">
    <location>
        <begin position="113"/>
        <end position="116"/>
    </location>
</feature>
<feature type="region of interest" description="G4" evidence="1">
    <location>
        <begin position="168"/>
        <end position="171"/>
    </location>
</feature>
<feature type="region of interest" description="G5" evidence="1">
    <location>
        <begin position="206"/>
        <end position="208"/>
    </location>
</feature>
<feature type="binding site" evidence="2">
    <location>
        <begin position="34"/>
        <end position="41"/>
    </location>
    <ligand>
        <name>GTP</name>
        <dbReference type="ChEBI" id="CHEBI:37565"/>
    </ligand>
</feature>
<feature type="binding site" evidence="2">
    <location>
        <begin position="113"/>
        <end position="117"/>
    </location>
    <ligand>
        <name>GTP</name>
        <dbReference type="ChEBI" id="CHEBI:37565"/>
    </ligand>
</feature>
<feature type="binding site" evidence="2">
    <location>
        <begin position="168"/>
        <end position="171"/>
    </location>
    <ligand>
        <name>GTP</name>
        <dbReference type="ChEBI" id="CHEBI:37565"/>
    </ligand>
</feature>
<comment type="function">
    <text evidence="2">With CysD forms the ATP sulfurylase (ATPS) that catalyzes the adenylation of sulfate producing adenosine 5'-phosphosulfate (APS) and diphosphate, the first enzymatic step in sulfur assimilation pathway. APS synthesis involves the formation of a high-energy phosphoric-sulfuric acid anhydride bond driven by GTP hydrolysis by CysN coupled to ATP hydrolysis by CysD.</text>
</comment>
<comment type="catalytic activity">
    <reaction evidence="2">
        <text>sulfate + ATP + H(+) = adenosine 5'-phosphosulfate + diphosphate</text>
        <dbReference type="Rhea" id="RHEA:18133"/>
        <dbReference type="ChEBI" id="CHEBI:15378"/>
        <dbReference type="ChEBI" id="CHEBI:16189"/>
        <dbReference type="ChEBI" id="CHEBI:30616"/>
        <dbReference type="ChEBI" id="CHEBI:33019"/>
        <dbReference type="ChEBI" id="CHEBI:58243"/>
        <dbReference type="EC" id="2.7.7.4"/>
    </reaction>
</comment>
<comment type="pathway">
    <text evidence="2">Sulfur metabolism; hydrogen sulfide biosynthesis; sulfite from sulfate: step 1/3.</text>
</comment>
<comment type="subunit">
    <text evidence="2">Heterodimer composed of CysD, the smaller subunit, and CysN.</text>
</comment>
<comment type="similarity">
    <text evidence="2 3">Belongs to the TRAFAC class translation factor GTPase superfamily. Classic translation factor GTPase family. CysN/NodQ subfamily.</text>
</comment>
<evidence type="ECO:0000250" key="1"/>
<evidence type="ECO:0000255" key="2">
    <source>
        <dbReference type="HAMAP-Rule" id="MF_00062"/>
    </source>
</evidence>
<evidence type="ECO:0000305" key="3"/>
<protein>
    <recommendedName>
        <fullName evidence="2">Sulfate adenylyltransferase subunit 1</fullName>
        <ecNumber evidence="2">2.7.7.4</ecNumber>
    </recommendedName>
    <alternativeName>
        <fullName evidence="2">ATP-sulfurylase large subunit</fullName>
    </alternativeName>
    <alternativeName>
        <fullName evidence="2">Sulfate adenylate transferase</fullName>
        <shortName evidence="2">SAT</shortName>
    </alternativeName>
</protein>
<name>CYSN_SALTI</name>
<gene>
    <name evidence="2" type="primary">cysN</name>
    <name type="ordered locus">STY3059</name>
    <name type="ordered locus">t2835</name>
</gene>
<sequence length="479" mass="53066">MNTILAQQIASEGGVEAWMIAQQHKSLLRFLTCGSVDDGKSTLIGRLLHDTLQIYEDQLSSLHNDSKRHGTQGEKLDLALLVDGLQAEREQGITIDVAYRYFSTEKRKFIIADTPGHEQYTRNMATGASTCDLAILLIDARKGVLDQTRRHSFISTLLGIKHLVVAINKMDLVDYREETFARIREDYLTFAEQLPGDLDIRFVPLSALEGDNVAAQSANMRWYSGPTLLEVLETVDIQRAVDRQPMRFPVQYVNRPNPDFRGYAGTLASGSVKVGERIKVLPSGVESSVARIVTFDGDKEEVCAGEAITLVLNDDIDISRGDLLLAANETLAPARHAAIDVVWMAEQPLAPGQSYDVKLAGKKTRARIEAICYQIDINNLTQRDVESLPLNGIGLVEMTFDEPLALDIYQQNPVTGGLIFIDRLSNVTVGAGMVRELDERGATPPVEYSAFELELNALVRRHFPHWDARDLLGDKHGAA</sequence>
<keyword id="KW-0067">ATP-binding</keyword>
<keyword id="KW-0342">GTP-binding</keyword>
<keyword id="KW-0547">Nucleotide-binding</keyword>
<keyword id="KW-0548">Nucleotidyltransferase</keyword>
<keyword id="KW-0808">Transferase</keyword>
<proteinExistence type="inferred from homology"/>
<dbReference type="EC" id="2.7.7.4" evidence="2"/>
<dbReference type="EMBL" id="AL513382">
    <property type="protein sequence ID" value="CAD06040.1"/>
    <property type="molecule type" value="Genomic_DNA"/>
</dbReference>
<dbReference type="EMBL" id="AE014613">
    <property type="protein sequence ID" value="AAO70392.1"/>
    <property type="molecule type" value="Genomic_DNA"/>
</dbReference>
<dbReference type="RefSeq" id="NP_457323.1">
    <property type="nucleotide sequence ID" value="NC_003198.1"/>
</dbReference>
<dbReference type="RefSeq" id="WP_001092273.1">
    <property type="nucleotide sequence ID" value="NZ_WSUR01000005.1"/>
</dbReference>
<dbReference type="SMR" id="Q8Z470"/>
<dbReference type="STRING" id="220341.gene:17586950"/>
<dbReference type="KEGG" id="stt:t2835"/>
<dbReference type="KEGG" id="sty:STY3059"/>
<dbReference type="PATRIC" id="fig|220341.7.peg.3112"/>
<dbReference type="eggNOG" id="COG2895">
    <property type="taxonomic scope" value="Bacteria"/>
</dbReference>
<dbReference type="HOGENOM" id="CLU_007265_5_2_6"/>
<dbReference type="OMA" id="MDLIGWD"/>
<dbReference type="OrthoDB" id="9804504at2"/>
<dbReference type="UniPathway" id="UPA00140">
    <property type="reaction ID" value="UER00204"/>
</dbReference>
<dbReference type="Proteomes" id="UP000000541">
    <property type="component" value="Chromosome"/>
</dbReference>
<dbReference type="Proteomes" id="UP000002670">
    <property type="component" value="Chromosome"/>
</dbReference>
<dbReference type="GO" id="GO:0005524">
    <property type="term" value="F:ATP binding"/>
    <property type="evidence" value="ECO:0007669"/>
    <property type="project" value="UniProtKB-KW"/>
</dbReference>
<dbReference type="GO" id="GO:0005525">
    <property type="term" value="F:GTP binding"/>
    <property type="evidence" value="ECO:0007669"/>
    <property type="project" value="UniProtKB-UniRule"/>
</dbReference>
<dbReference type="GO" id="GO:0003924">
    <property type="term" value="F:GTPase activity"/>
    <property type="evidence" value="ECO:0007669"/>
    <property type="project" value="InterPro"/>
</dbReference>
<dbReference type="GO" id="GO:0004781">
    <property type="term" value="F:sulfate adenylyltransferase (ATP) activity"/>
    <property type="evidence" value="ECO:0007669"/>
    <property type="project" value="UniProtKB-UniRule"/>
</dbReference>
<dbReference type="GO" id="GO:0070814">
    <property type="term" value="P:hydrogen sulfide biosynthetic process"/>
    <property type="evidence" value="ECO:0007669"/>
    <property type="project" value="UniProtKB-UniRule"/>
</dbReference>
<dbReference type="GO" id="GO:0000103">
    <property type="term" value="P:sulfate assimilation"/>
    <property type="evidence" value="ECO:0007669"/>
    <property type="project" value="UniProtKB-UniRule"/>
</dbReference>
<dbReference type="CDD" id="cd04166">
    <property type="entry name" value="CysN_ATPS"/>
    <property type="match status" value="1"/>
</dbReference>
<dbReference type="CDD" id="cd03695">
    <property type="entry name" value="CysN_NodQ_II"/>
    <property type="match status" value="1"/>
</dbReference>
<dbReference type="CDD" id="cd04095">
    <property type="entry name" value="CysN_NoDQ_III"/>
    <property type="match status" value="1"/>
</dbReference>
<dbReference type="FunFam" id="2.40.30.10:FF:000027">
    <property type="entry name" value="Sulfate adenylyltransferase subunit 1"/>
    <property type="match status" value="1"/>
</dbReference>
<dbReference type="FunFam" id="2.40.30.10:FF:000031">
    <property type="entry name" value="Sulfate adenylyltransferase subunit 1"/>
    <property type="match status" value="1"/>
</dbReference>
<dbReference type="FunFam" id="3.40.50.300:FF:000119">
    <property type="entry name" value="Sulfate adenylyltransferase subunit 1"/>
    <property type="match status" value="1"/>
</dbReference>
<dbReference type="Gene3D" id="3.40.50.300">
    <property type="entry name" value="P-loop containing nucleotide triphosphate hydrolases"/>
    <property type="match status" value="1"/>
</dbReference>
<dbReference type="Gene3D" id="2.40.30.10">
    <property type="entry name" value="Translation factors"/>
    <property type="match status" value="2"/>
</dbReference>
<dbReference type="HAMAP" id="MF_00062">
    <property type="entry name" value="Sulf_adenylyltr_sub1"/>
    <property type="match status" value="1"/>
</dbReference>
<dbReference type="InterPro" id="IPR041757">
    <property type="entry name" value="CysN_GTP-bd"/>
</dbReference>
<dbReference type="InterPro" id="IPR044138">
    <property type="entry name" value="CysN_II"/>
</dbReference>
<dbReference type="InterPro" id="IPR044139">
    <property type="entry name" value="CysN_NoDQ_III"/>
</dbReference>
<dbReference type="InterPro" id="IPR031157">
    <property type="entry name" value="G_TR_CS"/>
</dbReference>
<dbReference type="InterPro" id="IPR054696">
    <property type="entry name" value="GTP-eEF1A_C"/>
</dbReference>
<dbReference type="InterPro" id="IPR027417">
    <property type="entry name" value="P-loop_NTPase"/>
</dbReference>
<dbReference type="InterPro" id="IPR005225">
    <property type="entry name" value="Small_GTP-bd"/>
</dbReference>
<dbReference type="InterPro" id="IPR011779">
    <property type="entry name" value="SO4_adenylTrfase_lsu"/>
</dbReference>
<dbReference type="InterPro" id="IPR000795">
    <property type="entry name" value="T_Tr_GTP-bd_dom"/>
</dbReference>
<dbReference type="InterPro" id="IPR050100">
    <property type="entry name" value="TRAFAC_GTPase_members"/>
</dbReference>
<dbReference type="InterPro" id="IPR009000">
    <property type="entry name" value="Transl_B-barrel_sf"/>
</dbReference>
<dbReference type="InterPro" id="IPR009001">
    <property type="entry name" value="Transl_elong_EF1A/Init_IF2_C"/>
</dbReference>
<dbReference type="NCBIfam" id="TIGR02034">
    <property type="entry name" value="CysN"/>
    <property type="match status" value="1"/>
</dbReference>
<dbReference type="NCBIfam" id="NF003478">
    <property type="entry name" value="PRK05124.1"/>
    <property type="match status" value="1"/>
</dbReference>
<dbReference type="NCBIfam" id="TIGR00231">
    <property type="entry name" value="small_GTP"/>
    <property type="match status" value="1"/>
</dbReference>
<dbReference type="PANTHER" id="PTHR23115">
    <property type="entry name" value="TRANSLATION FACTOR"/>
    <property type="match status" value="1"/>
</dbReference>
<dbReference type="Pfam" id="PF22594">
    <property type="entry name" value="GTP-eEF1A_C"/>
    <property type="match status" value="1"/>
</dbReference>
<dbReference type="Pfam" id="PF00009">
    <property type="entry name" value="GTP_EFTU"/>
    <property type="match status" value="1"/>
</dbReference>
<dbReference type="PRINTS" id="PR00315">
    <property type="entry name" value="ELONGATNFCT"/>
</dbReference>
<dbReference type="SUPFAM" id="SSF50465">
    <property type="entry name" value="EF-Tu/eEF-1alpha/eIF2-gamma C-terminal domain"/>
    <property type="match status" value="1"/>
</dbReference>
<dbReference type="SUPFAM" id="SSF52540">
    <property type="entry name" value="P-loop containing nucleoside triphosphate hydrolases"/>
    <property type="match status" value="1"/>
</dbReference>
<dbReference type="SUPFAM" id="SSF50447">
    <property type="entry name" value="Translation proteins"/>
    <property type="match status" value="1"/>
</dbReference>
<dbReference type="PROSITE" id="PS00301">
    <property type="entry name" value="G_TR_1"/>
    <property type="match status" value="1"/>
</dbReference>
<dbReference type="PROSITE" id="PS51722">
    <property type="entry name" value="G_TR_2"/>
    <property type="match status" value="1"/>
</dbReference>
<organism>
    <name type="scientific">Salmonella typhi</name>
    <dbReference type="NCBI Taxonomy" id="90370"/>
    <lineage>
        <taxon>Bacteria</taxon>
        <taxon>Pseudomonadati</taxon>
        <taxon>Pseudomonadota</taxon>
        <taxon>Gammaproteobacteria</taxon>
        <taxon>Enterobacterales</taxon>
        <taxon>Enterobacteriaceae</taxon>
        <taxon>Salmonella</taxon>
    </lineage>
</organism>
<reference key="1">
    <citation type="journal article" date="2001" name="Nature">
        <title>Complete genome sequence of a multiple drug resistant Salmonella enterica serovar Typhi CT18.</title>
        <authorList>
            <person name="Parkhill J."/>
            <person name="Dougan G."/>
            <person name="James K.D."/>
            <person name="Thomson N.R."/>
            <person name="Pickard D."/>
            <person name="Wain J."/>
            <person name="Churcher C.M."/>
            <person name="Mungall K.L."/>
            <person name="Bentley S.D."/>
            <person name="Holden M.T.G."/>
            <person name="Sebaihia M."/>
            <person name="Baker S."/>
            <person name="Basham D."/>
            <person name="Brooks K."/>
            <person name="Chillingworth T."/>
            <person name="Connerton P."/>
            <person name="Cronin A."/>
            <person name="Davis P."/>
            <person name="Davies R.M."/>
            <person name="Dowd L."/>
            <person name="White N."/>
            <person name="Farrar J."/>
            <person name="Feltwell T."/>
            <person name="Hamlin N."/>
            <person name="Haque A."/>
            <person name="Hien T.T."/>
            <person name="Holroyd S."/>
            <person name="Jagels K."/>
            <person name="Krogh A."/>
            <person name="Larsen T.S."/>
            <person name="Leather S."/>
            <person name="Moule S."/>
            <person name="O'Gaora P."/>
            <person name="Parry C."/>
            <person name="Quail M.A."/>
            <person name="Rutherford K.M."/>
            <person name="Simmonds M."/>
            <person name="Skelton J."/>
            <person name="Stevens K."/>
            <person name="Whitehead S."/>
            <person name="Barrell B.G."/>
        </authorList>
    </citation>
    <scope>NUCLEOTIDE SEQUENCE [LARGE SCALE GENOMIC DNA]</scope>
    <source>
        <strain>CT18</strain>
    </source>
</reference>
<reference key="2">
    <citation type="journal article" date="2003" name="J. Bacteriol.">
        <title>Comparative genomics of Salmonella enterica serovar Typhi strains Ty2 and CT18.</title>
        <authorList>
            <person name="Deng W."/>
            <person name="Liou S.-R."/>
            <person name="Plunkett G. III"/>
            <person name="Mayhew G.F."/>
            <person name="Rose D.J."/>
            <person name="Burland V."/>
            <person name="Kodoyianni V."/>
            <person name="Schwartz D.C."/>
            <person name="Blattner F.R."/>
        </authorList>
    </citation>
    <scope>NUCLEOTIDE SEQUENCE [LARGE SCALE GENOMIC DNA]</scope>
    <source>
        <strain>ATCC 700931 / Ty2</strain>
    </source>
</reference>